<proteinExistence type="evidence at transcript level"/>
<comment type="function">
    <text evidence="4">Carries out a dual function: signal transduction and activation of transcription. Mediates cellular responses to the cytokine KITLG/SCF and other growth factors. Binds to the GAS element and activates PRL-induced transcription. Positively regulates hematopoietic/erythroid differentiation.</text>
</comment>
<comment type="subunit">
    <text evidence="3 4">Upon activation, forms a homodimer or a heterodimer with a related family member. Binds NR3C1. Interacts with NCOA1. Interacts with NMI. Interacts with SOCS7. Interacts (via SH2 domain) with INSR. Interacts with CPEB3; this inhibits STAT5B-mediated transcriptional activation.</text>
</comment>
<comment type="subcellular location">
    <subcellularLocation>
        <location evidence="3">Cytoplasm</location>
    </subcellularLocation>
    <subcellularLocation>
        <location evidence="3">Nucleus</location>
    </subcellularLocation>
    <text evidence="1">Translocated into the nucleus in response to phosphorylation.</text>
</comment>
<comment type="PTM">
    <text evidence="4">Tyrosine phosphorylated in response to signaling via activated KIT, resulting in translocation to the nucleus. Tyrosine phosphorylated in response to signaling via activated FLT3; wild-type FLT3 results in much weaker phosphorylation than constitutively activated mutant FLT3. Alternatively, can be phosphorylated by JAK2. Phosphorylation at Tyr-699 by PTK6 or HCK leads to an increase of its transcriptional activity.</text>
</comment>
<comment type="similarity">
    <text evidence="6">Belongs to the transcription factor STAT family.</text>
</comment>
<feature type="chain" id="PRO_0000182428" description="Signal transducer and activator of transcription 5B">
    <location>
        <begin position="1"/>
        <end position="787"/>
    </location>
</feature>
<feature type="domain" description="SH2" evidence="5">
    <location>
        <begin position="589"/>
        <end position="686"/>
    </location>
</feature>
<feature type="modified residue" description="Phosphotyrosine" evidence="4">
    <location>
        <position position="90"/>
    </location>
</feature>
<feature type="modified residue" description="Phosphoserine" evidence="4">
    <location>
        <position position="128"/>
    </location>
</feature>
<feature type="modified residue" description="Phosphotyrosine" evidence="2">
    <location>
        <position position="682"/>
    </location>
</feature>
<feature type="modified residue" description="Phosphotyrosine; by HCK, JAK and PTK6" evidence="4">
    <location>
        <position position="699"/>
    </location>
</feature>
<feature type="sequence conflict" description="In Ref. 1; CAB51845." evidence="6" ref="1">
    <original>L</original>
    <variation>F</variation>
    <location>
        <position position="133"/>
    </location>
</feature>
<feature type="sequence conflict" description="In Ref. 1; CAB51845 and 2; AAI12569." evidence="6" ref="1 2">
    <original>L</original>
    <variation>V</variation>
    <location>
        <position position="209"/>
    </location>
</feature>
<feature type="sequence conflict" description="In Ref. 1; CAB51845 and 2; AAI12569." evidence="6" ref="1 2">
    <original>F</original>
    <variation>L</variation>
    <location>
        <position position="299"/>
    </location>
</feature>
<feature type="sequence conflict" description="In Ref. 1; CAB51845." evidence="6" ref="1">
    <original>P</original>
    <variation>S</variation>
    <location>
        <position position="611"/>
    </location>
</feature>
<feature type="sequence conflict" description="In Ref. 1; CAB52172." evidence="6" ref="1">
    <location>
        <position position="636"/>
    </location>
</feature>
<feature type="sequence conflict" description="In Ref. 1; CAB52172." evidence="6" ref="1">
    <location>
        <position position="693"/>
    </location>
</feature>
<evidence type="ECO:0000250" key="1"/>
<evidence type="ECO:0000250" key="2">
    <source>
        <dbReference type="UniProtKB" id="P42229"/>
    </source>
</evidence>
<evidence type="ECO:0000250" key="3">
    <source>
        <dbReference type="UniProtKB" id="P42232"/>
    </source>
</evidence>
<evidence type="ECO:0000250" key="4">
    <source>
        <dbReference type="UniProtKB" id="P51692"/>
    </source>
</evidence>
<evidence type="ECO:0000255" key="5">
    <source>
        <dbReference type="PROSITE-ProRule" id="PRU00191"/>
    </source>
</evidence>
<evidence type="ECO:0000305" key="6"/>
<organism>
    <name type="scientific">Bos taurus</name>
    <name type="common">Bovine</name>
    <dbReference type="NCBI Taxonomy" id="9913"/>
    <lineage>
        <taxon>Eukaryota</taxon>
        <taxon>Metazoa</taxon>
        <taxon>Chordata</taxon>
        <taxon>Craniata</taxon>
        <taxon>Vertebrata</taxon>
        <taxon>Euteleostomi</taxon>
        <taxon>Mammalia</taxon>
        <taxon>Eutheria</taxon>
        <taxon>Laurasiatheria</taxon>
        <taxon>Artiodactyla</taxon>
        <taxon>Ruminantia</taxon>
        <taxon>Pecora</taxon>
        <taxon>Bovidae</taxon>
        <taxon>Bovinae</taxon>
        <taxon>Bos</taxon>
    </lineage>
</organism>
<protein>
    <recommendedName>
        <fullName>Signal transducer and activator of transcription 5B</fullName>
    </recommendedName>
</protein>
<sequence length="787" mass="89991">MAVWIQAQQLQGDALHQMQALYGQHFPIEVRHYLSQWIEGQAWDSIDLDNPQENIKATQLLEGLVQELQKKAEHQVGEDGFLLKIKLGHYATQLQNTYDRCPMELVRCIRHILYNEQRLVREANNGTSPAGSLADAMSQKHLQINQTFEELRLVTQDTENELKKLQQTQEYFIIQYQESLRIQAQFAQLAQLNPQERLSRETALQQKQLSLEAWLQREAQTLQQYRVELAEKHQKTLQLLRKQQTIILDDELIQWKRRQQLAGNGGPPEGSLDVLQSWCEKLAEIIWQNRQQIRRAEHFCQQLPIPGPVEEMLAEVNATITDIISALVTSTFIIEKQPPQVLKTQTKFAATVRLLVGGKLNVHMNPPQVKATIISEQQAKSLLKNENTRNDYSGEILNNCCVMEYHQATGTLSAHFRNMSLKRIKRSDRRGAESVTEEKFTILFESQFSVGGNELVFQVKTLSLPVVVIVHGSQDNNATATVLWDNAFAEPGRVPFAVPDKVLWPQLCEALNMKFKAEVQSNRGLTKENLVFLAQKLFNSSSSHLEDYNGMSVSWSQFNRENLPGRNYTFWQWFDGVMEVLKKHLKPHWNDGAILGFVNKQQAHDLLINKPDGTFLLRFSDSEIGGITIAWKFDSQERMFWNLMPFTTRDFSIRSLADRLGDLSYLIYVFPDRPKDEVYSKYYTPVPCEPATAKAVDGYVKPQIKQVVPEFVSASADSAGGSATYMDQAPSPAVCPQPHYNMYPQNPDPVLDNDGDFDLDDTIDVARRVEELLGRPMDSQWIPHAQS</sequence>
<accession>Q9TUM3</accession>
<accession>O77702</accession>
<accession>Q2KIP0</accession>
<accession>Q9TUM2</accession>
<reference key="1">
    <citation type="journal article" date="2000" name="J. Mol. Evol.">
        <title>Molecular characterization of STAT5A- and STAT5B-encoding genes reveals extended intragenic sequence homogeneity in cattle and mouse and different degrees of divergent evolution of various domains.</title>
        <authorList>
            <person name="Seyfert H.-M."/>
            <person name="Pitra C."/>
            <person name="Meyer L."/>
            <person name="Brunner R.M."/>
            <person name="Wheeler T.T."/>
            <person name="Molenaar A."/>
            <person name="McCracken J.Y."/>
            <person name="Herrmann J."/>
            <person name="Thiesen H.-J."/>
            <person name="Schwerin M."/>
        </authorList>
    </citation>
    <scope>NUCLEOTIDE SEQUENCE [GENOMIC DNA / MRNA]</scope>
    <source>
        <tissue>Mammary gland</tissue>
    </source>
</reference>
<reference key="2">
    <citation type="submission" date="2006-01" db="EMBL/GenBank/DDBJ databases">
        <authorList>
            <consortium name="NIH - Mammalian Gene Collection (MGC) project"/>
        </authorList>
    </citation>
    <scope>NUCLEOTIDE SEQUENCE [LARGE SCALE MRNA]</scope>
    <source>
        <strain>Hereford</strain>
        <tissue>Testis</tissue>
    </source>
</reference>
<reference key="3">
    <citation type="journal article" date="1999" name="Anim. Genet.">
        <title>A highly polymorphic GT-repeat in the bovine STAT5B encoding gene on BTA19.</title>
        <authorList>
            <person name="Meyer L."/>
            <person name="Brockmann G."/>
            <person name="Schwerin M."/>
            <person name="Seyfert H.-M."/>
        </authorList>
    </citation>
    <scope>NUCLEOTIDE SEQUENCE [GENOMIC DNA] OF 185-560</scope>
    <source>
        <tissue>Blood</tissue>
    </source>
</reference>
<dbReference type="EMBL" id="AJ237933">
    <property type="protein sequence ID" value="CAB51845.1"/>
    <property type="molecule type" value="mRNA"/>
</dbReference>
<dbReference type="EMBL" id="AJ237934">
    <property type="protein sequence ID" value="CAB52172.1"/>
    <property type="molecule type" value="Genomic_DNA"/>
</dbReference>
<dbReference type="EMBL" id="AJ237935">
    <property type="protein sequence ID" value="CAB52172.1"/>
    <property type="status" value="JOINED"/>
    <property type="molecule type" value="Genomic_DNA"/>
</dbReference>
<dbReference type="EMBL" id="AJ237936">
    <property type="protein sequence ID" value="CAB52172.1"/>
    <property type="status" value="JOINED"/>
    <property type="molecule type" value="Genomic_DNA"/>
</dbReference>
<dbReference type="EMBL" id="BC112568">
    <property type="protein sequence ID" value="AAI12569.1"/>
    <property type="molecule type" value="mRNA"/>
</dbReference>
<dbReference type="EMBL" id="AJ005638">
    <property type="protein sequence ID" value="CAA06641.1"/>
    <property type="molecule type" value="Genomic_DNA"/>
</dbReference>
<dbReference type="RefSeq" id="NP_777042.2">
    <property type="nucleotide sequence ID" value="NM_174617.4"/>
</dbReference>
<dbReference type="RefSeq" id="XP_005220730.1">
    <property type="nucleotide sequence ID" value="XM_005220673.3"/>
</dbReference>
<dbReference type="RefSeq" id="XP_005220731.1">
    <property type="nucleotide sequence ID" value="XM_005220674.3"/>
</dbReference>
<dbReference type="SMR" id="Q9TUM3"/>
<dbReference type="FunCoup" id="Q9TUM3">
    <property type="interactions" value="2371"/>
</dbReference>
<dbReference type="STRING" id="9913.ENSBTAP00000012497"/>
<dbReference type="PaxDb" id="9913-ENSBTAP00000012497"/>
<dbReference type="GeneID" id="282376"/>
<dbReference type="KEGG" id="bta:282376"/>
<dbReference type="CTD" id="6777"/>
<dbReference type="eggNOG" id="KOG3667">
    <property type="taxonomic scope" value="Eukaryota"/>
</dbReference>
<dbReference type="HOGENOM" id="CLU_014189_2_2_1"/>
<dbReference type="InParanoid" id="Q9TUM3"/>
<dbReference type="OrthoDB" id="19300at2759"/>
<dbReference type="TreeFam" id="TF318648"/>
<dbReference type="Proteomes" id="UP000009136">
    <property type="component" value="Unplaced"/>
</dbReference>
<dbReference type="GO" id="GO:0005737">
    <property type="term" value="C:cytoplasm"/>
    <property type="evidence" value="ECO:0000250"/>
    <property type="project" value="UniProtKB"/>
</dbReference>
<dbReference type="GO" id="GO:0005829">
    <property type="term" value="C:cytosol"/>
    <property type="evidence" value="ECO:0007669"/>
    <property type="project" value="UniProtKB-ARBA"/>
</dbReference>
<dbReference type="GO" id="GO:0005634">
    <property type="term" value="C:nucleus"/>
    <property type="evidence" value="ECO:0000250"/>
    <property type="project" value="UniProtKB"/>
</dbReference>
<dbReference type="GO" id="GO:0090575">
    <property type="term" value="C:RNA polymerase II transcription regulator complex"/>
    <property type="evidence" value="ECO:0000318"/>
    <property type="project" value="GO_Central"/>
</dbReference>
<dbReference type="GO" id="GO:0003682">
    <property type="term" value="F:chromatin binding"/>
    <property type="evidence" value="ECO:0000250"/>
    <property type="project" value="UniProtKB"/>
</dbReference>
<dbReference type="GO" id="GO:0003677">
    <property type="term" value="F:DNA binding"/>
    <property type="evidence" value="ECO:0000250"/>
    <property type="project" value="AgBase"/>
</dbReference>
<dbReference type="GO" id="GO:0001228">
    <property type="term" value="F:DNA-binding transcription activator activity, RNA polymerase II-specific"/>
    <property type="evidence" value="ECO:0000250"/>
    <property type="project" value="UniProtKB"/>
</dbReference>
<dbReference type="GO" id="GO:0000981">
    <property type="term" value="F:DNA-binding transcription factor activity, RNA polymerase II-specific"/>
    <property type="evidence" value="ECO:0000318"/>
    <property type="project" value="GO_Central"/>
</dbReference>
<dbReference type="GO" id="GO:0046983">
    <property type="term" value="F:protein dimerization activity"/>
    <property type="evidence" value="ECO:0000250"/>
    <property type="project" value="UniProtKB"/>
</dbReference>
<dbReference type="GO" id="GO:0042803">
    <property type="term" value="F:protein homodimerization activity"/>
    <property type="evidence" value="ECO:0000250"/>
    <property type="project" value="UniProtKB"/>
</dbReference>
<dbReference type="GO" id="GO:0000978">
    <property type="term" value="F:RNA polymerase II cis-regulatory region sequence-specific DNA binding"/>
    <property type="evidence" value="ECO:0000318"/>
    <property type="project" value="GO_Central"/>
</dbReference>
<dbReference type="GO" id="GO:0007259">
    <property type="term" value="P:cell surface receptor signaling pathway via JAK-STAT"/>
    <property type="evidence" value="ECO:0000250"/>
    <property type="project" value="AgBase"/>
</dbReference>
<dbReference type="GO" id="GO:0071364">
    <property type="term" value="P:cellular response to epidermal growth factor stimulus"/>
    <property type="evidence" value="ECO:0000250"/>
    <property type="project" value="UniProtKB"/>
</dbReference>
<dbReference type="GO" id="GO:0071363">
    <property type="term" value="P:cellular response to growth factor stimulus"/>
    <property type="evidence" value="ECO:0000250"/>
    <property type="project" value="UniProtKB"/>
</dbReference>
<dbReference type="GO" id="GO:0019221">
    <property type="term" value="P:cytokine-mediated signaling pathway"/>
    <property type="evidence" value="ECO:0000250"/>
    <property type="project" value="AgBase"/>
</dbReference>
<dbReference type="GO" id="GO:0006952">
    <property type="term" value="P:defense response"/>
    <property type="evidence" value="ECO:0000318"/>
    <property type="project" value="GO_Central"/>
</dbReference>
<dbReference type="GO" id="GO:0046543">
    <property type="term" value="P:development of secondary female sexual characteristics"/>
    <property type="evidence" value="ECO:0000250"/>
    <property type="project" value="AgBase"/>
</dbReference>
<dbReference type="GO" id="GO:0046544">
    <property type="term" value="P:development of secondary male sexual characteristics"/>
    <property type="evidence" value="ECO:0000250"/>
    <property type="project" value="AgBase"/>
</dbReference>
<dbReference type="GO" id="GO:0007565">
    <property type="term" value="P:female pregnancy"/>
    <property type="evidence" value="ECO:0000250"/>
    <property type="project" value="AgBase"/>
</dbReference>
<dbReference type="GO" id="GO:0060397">
    <property type="term" value="P:growth hormone receptor signaling pathway via JAK-STAT"/>
    <property type="evidence" value="ECO:0000318"/>
    <property type="project" value="GO_Central"/>
</dbReference>
<dbReference type="GO" id="GO:0007595">
    <property type="term" value="P:lactation"/>
    <property type="evidence" value="ECO:0000250"/>
    <property type="project" value="AgBase"/>
</dbReference>
<dbReference type="GO" id="GO:0019915">
    <property type="term" value="P:lipid storage"/>
    <property type="evidence" value="ECO:0000250"/>
    <property type="project" value="AgBase"/>
</dbReference>
<dbReference type="GO" id="GO:0001553">
    <property type="term" value="P:luteinization"/>
    <property type="evidence" value="ECO:0000250"/>
    <property type="project" value="AgBase"/>
</dbReference>
<dbReference type="GO" id="GO:0001779">
    <property type="term" value="P:natural killer cell differentiation"/>
    <property type="evidence" value="ECO:0000250"/>
    <property type="project" value="AgBase"/>
</dbReference>
<dbReference type="GO" id="GO:0043066">
    <property type="term" value="P:negative regulation of apoptotic process"/>
    <property type="evidence" value="ECO:0000250"/>
    <property type="project" value="AgBase"/>
</dbReference>
<dbReference type="GO" id="GO:0045647">
    <property type="term" value="P:negative regulation of erythrocyte differentiation"/>
    <property type="evidence" value="ECO:0000250"/>
    <property type="project" value="AgBase"/>
</dbReference>
<dbReference type="GO" id="GO:0042104">
    <property type="term" value="P:positive regulation of activated T cell proliferation"/>
    <property type="evidence" value="ECO:0000250"/>
    <property type="project" value="AgBase"/>
</dbReference>
<dbReference type="GO" id="GO:0045579">
    <property type="term" value="P:positive regulation of B cell differentiation"/>
    <property type="evidence" value="ECO:0000250"/>
    <property type="project" value="AgBase"/>
</dbReference>
<dbReference type="GO" id="GO:0008284">
    <property type="term" value="P:positive regulation of cell population proliferation"/>
    <property type="evidence" value="ECO:0000250"/>
    <property type="project" value="AgBase"/>
</dbReference>
<dbReference type="GO" id="GO:0045648">
    <property type="term" value="P:positive regulation of erythrocyte differentiation"/>
    <property type="evidence" value="ECO:0000250"/>
    <property type="project" value="UniProtKB"/>
</dbReference>
<dbReference type="GO" id="GO:0050729">
    <property type="term" value="P:positive regulation of inflammatory response"/>
    <property type="evidence" value="ECO:0000250"/>
    <property type="project" value="AgBase"/>
</dbReference>
<dbReference type="GO" id="GO:0032743">
    <property type="term" value="P:positive regulation of interleukin-2 production"/>
    <property type="evidence" value="ECO:0000250"/>
    <property type="project" value="AgBase"/>
</dbReference>
<dbReference type="GO" id="GO:0045931">
    <property type="term" value="P:positive regulation of mitotic cell cycle"/>
    <property type="evidence" value="ECO:0000250"/>
    <property type="project" value="AgBase"/>
</dbReference>
<dbReference type="GO" id="GO:0040018">
    <property type="term" value="P:positive regulation of multicellular organism growth"/>
    <property type="evidence" value="ECO:0000250"/>
    <property type="project" value="AgBase"/>
</dbReference>
<dbReference type="GO" id="GO:0045944">
    <property type="term" value="P:positive regulation of transcription by RNA polymerase II"/>
    <property type="evidence" value="ECO:0000250"/>
    <property type="project" value="AgBase"/>
</dbReference>
<dbReference type="GO" id="GO:0042448">
    <property type="term" value="P:progesterone metabolic process"/>
    <property type="evidence" value="ECO:0000250"/>
    <property type="project" value="AgBase"/>
</dbReference>
<dbReference type="GO" id="GO:0030155">
    <property type="term" value="P:regulation of cell adhesion"/>
    <property type="evidence" value="ECO:0000250"/>
    <property type="project" value="AgBase"/>
</dbReference>
<dbReference type="GO" id="GO:0042127">
    <property type="term" value="P:regulation of cell population proliferation"/>
    <property type="evidence" value="ECO:0000318"/>
    <property type="project" value="GO_Central"/>
</dbReference>
<dbReference type="GO" id="GO:0030856">
    <property type="term" value="P:regulation of epithelial cell differentiation"/>
    <property type="evidence" value="ECO:0000250"/>
    <property type="project" value="AgBase"/>
</dbReference>
<dbReference type="GO" id="GO:0019218">
    <property type="term" value="P:regulation of steroid metabolic process"/>
    <property type="evidence" value="ECO:0000250"/>
    <property type="project" value="AgBase"/>
</dbReference>
<dbReference type="GO" id="GO:0006357">
    <property type="term" value="P:regulation of transcription by RNA polymerase II"/>
    <property type="evidence" value="ECO:0000318"/>
    <property type="project" value="GO_Central"/>
</dbReference>
<dbReference type="GO" id="GO:0043434">
    <property type="term" value="P:response to peptide hormone"/>
    <property type="evidence" value="ECO:0000318"/>
    <property type="project" value="GO_Central"/>
</dbReference>
<dbReference type="GO" id="GO:0043029">
    <property type="term" value="P:T cell homeostasis"/>
    <property type="evidence" value="ECO:0000250"/>
    <property type="project" value="AgBase"/>
</dbReference>
<dbReference type="CDD" id="cd10420">
    <property type="entry name" value="SH2_STAT5b"/>
    <property type="match status" value="1"/>
</dbReference>
<dbReference type="CDD" id="cd16855">
    <property type="entry name" value="STAT5_CCD"/>
    <property type="match status" value="1"/>
</dbReference>
<dbReference type="CDD" id="cd16849">
    <property type="entry name" value="STAT5_DBD"/>
    <property type="match status" value="1"/>
</dbReference>
<dbReference type="FunFam" id="1.10.532.10:FF:000002">
    <property type="entry name" value="Signal transducer and activator of transcription"/>
    <property type="match status" value="1"/>
</dbReference>
<dbReference type="FunFam" id="1.20.1050.20:FF:000002">
    <property type="entry name" value="Signal transducer and activator of transcription"/>
    <property type="match status" value="1"/>
</dbReference>
<dbReference type="FunFam" id="2.60.40.630:FF:000002">
    <property type="entry name" value="Signal transducer and activator of transcription"/>
    <property type="match status" value="1"/>
</dbReference>
<dbReference type="FunFam" id="3.30.505.10:FF:000025">
    <property type="entry name" value="Signal transducer and activator of transcription"/>
    <property type="match status" value="1"/>
</dbReference>
<dbReference type="FunFam" id="1.10.238.10:FF:000029">
    <property type="entry name" value="Signal transducer and transcription activator 6"/>
    <property type="match status" value="1"/>
</dbReference>
<dbReference type="Gene3D" id="1.10.238.10">
    <property type="entry name" value="EF-hand"/>
    <property type="match status" value="1"/>
</dbReference>
<dbReference type="Gene3D" id="3.30.505.10">
    <property type="entry name" value="SH2 domain"/>
    <property type="match status" value="1"/>
</dbReference>
<dbReference type="Gene3D" id="1.20.1050.20">
    <property type="entry name" value="STAT transcription factor, all-alpha domain"/>
    <property type="match status" value="1"/>
</dbReference>
<dbReference type="Gene3D" id="2.60.40.630">
    <property type="entry name" value="STAT transcription factor, DNA-binding domain"/>
    <property type="match status" value="1"/>
</dbReference>
<dbReference type="Gene3D" id="1.10.532.10">
    <property type="entry name" value="STAT transcription factor, N-terminal domain"/>
    <property type="match status" value="1"/>
</dbReference>
<dbReference type="InterPro" id="IPR008967">
    <property type="entry name" value="p53-like_TF_DNA-bd_sf"/>
</dbReference>
<dbReference type="InterPro" id="IPR000980">
    <property type="entry name" value="SH2"/>
</dbReference>
<dbReference type="InterPro" id="IPR036860">
    <property type="entry name" value="SH2_dom_sf"/>
</dbReference>
<dbReference type="InterPro" id="IPR001217">
    <property type="entry name" value="STAT"/>
</dbReference>
<dbReference type="InterPro" id="IPR046994">
    <property type="entry name" value="STAT5_CCD"/>
</dbReference>
<dbReference type="InterPro" id="IPR035858">
    <property type="entry name" value="STAT5a/5b_DBD"/>
</dbReference>
<dbReference type="InterPro" id="IPR035886">
    <property type="entry name" value="STAT5b_SH2"/>
</dbReference>
<dbReference type="InterPro" id="IPR048988">
    <property type="entry name" value="STAT_linker"/>
</dbReference>
<dbReference type="InterPro" id="IPR036535">
    <property type="entry name" value="STAT_N_sf"/>
</dbReference>
<dbReference type="InterPro" id="IPR013800">
    <property type="entry name" value="STAT_TF_alpha"/>
</dbReference>
<dbReference type="InterPro" id="IPR015988">
    <property type="entry name" value="STAT_TF_coiled-coil"/>
</dbReference>
<dbReference type="InterPro" id="IPR013801">
    <property type="entry name" value="STAT_TF_DNA-bd"/>
</dbReference>
<dbReference type="InterPro" id="IPR012345">
    <property type="entry name" value="STAT_TF_DNA-bd_N"/>
</dbReference>
<dbReference type="InterPro" id="IPR013799">
    <property type="entry name" value="STAT_TF_prot_interaction"/>
</dbReference>
<dbReference type="PANTHER" id="PTHR11801">
    <property type="entry name" value="SIGNAL TRANSDUCER AND ACTIVATOR OF TRANSCRIPTION"/>
    <property type="match status" value="1"/>
</dbReference>
<dbReference type="Pfam" id="PF00017">
    <property type="entry name" value="SH2"/>
    <property type="match status" value="1"/>
</dbReference>
<dbReference type="Pfam" id="PF01017">
    <property type="entry name" value="STAT_alpha"/>
    <property type="match status" value="1"/>
</dbReference>
<dbReference type="Pfam" id="PF02864">
    <property type="entry name" value="STAT_bind"/>
    <property type="match status" value="1"/>
</dbReference>
<dbReference type="Pfam" id="PF02865">
    <property type="entry name" value="STAT_int"/>
    <property type="match status" value="1"/>
</dbReference>
<dbReference type="Pfam" id="PF21354">
    <property type="entry name" value="STAT_linker"/>
    <property type="match status" value="1"/>
</dbReference>
<dbReference type="SMART" id="SM00252">
    <property type="entry name" value="SH2"/>
    <property type="match status" value="1"/>
</dbReference>
<dbReference type="SMART" id="SM00964">
    <property type="entry name" value="STAT_int"/>
    <property type="match status" value="1"/>
</dbReference>
<dbReference type="SUPFAM" id="SSF49417">
    <property type="entry name" value="p53-like transcription factors"/>
    <property type="match status" value="1"/>
</dbReference>
<dbReference type="SUPFAM" id="SSF55550">
    <property type="entry name" value="SH2 domain"/>
    <property type="match status" value="1"/>
</dbReference>
<dbReference type="SUPFAM" id="SSF47655">
    <property type="entry name" value="STAT"/>
    <property type="match status" value="1"/>
</dbReference>
<dbReference type="SUPFAM" id="SSF48092">
    <property type="entry name" value="Transcription factor STAT-4 N-domain"/>
    <property type="match status" value="1"/>
</dbReference>
<dbReference type="PROSITE" id="PS50001">
    <property type="entry name" value="SH2"/>
    <property type="match status" value="1"/>
</dbReference>
<gene>
    <name type="primary">STAT5B</name>
</gene>
<keyword id="KW-0010">Activator</keyword>
<keyword id="KW-0963">Cytoplasm</keyword>
<keyword id="KW-0238">DNA-binding</keyword>
<keyword id="KW-0539">Nucleus</keyword>
<keyword id="KW-0597">Phosphoprotein</keyword>
<keyword id="KW-1185">Reference proteome</keyword>
<keyword id="KW-0727">SH2 domain</keyword>
<keyword id="KW-0804">Transcription</keyword>
<keyword id="KW-0805">Transcription regulation</keyword>
<name>STA5B_BOVIN</name>